<protein>
    <recommendedName>
        <fullName evidence="1">Large ribosomal subunit protein uL5</fullName>
    </recommendedName>
    <alternativeName>
        <fullName evidence="2">50S ribosomal protein L5</fullName>
    </alternativeName>
</protein>
<gene>
    <name evidence="1" type="primary">rplE</name>
    <name type="ordered locus">RBE_1050</name>
</gene>
<keyword id="KW-0687">Ribonucleoprotein</keyword>
<keyword id="KW-0689">Ribosomal protein</keyword>
<keyword id="KW-0694">RNA-binding</keyword>
<keyword id="KW-0699">rRNA-binding</keyword>
<keyword id="KW-0820">tRNA-binding</keyword>
<proteinExistence type="inferred from homology"/>
<reference key="1">
    <citation type="journal article" date="2006" name="PLoS Genet.">
        <title>Genome sequence of Rickettsia bellii illuminates the role of amoebae in gene exchanges between intracellular pathogens.</title>
        <authorList>
            <person name="Ogata H."/>
            <person name="La Scola B."/>
            <person name="Audic S."/>
            <person name="Renesto P."/>
            <person name="Blanc G."/>
            <person name="Robert C."/>
            <person name="Fournier P.-E."/>
            <person name="Claverie J.-M."/>
            <person name="Raoult D."/>
        </authorList>
    </citation>
    <scope>NUCLEOTIDE SEQUENCE [LARGE SCALE GENOMIC DNA]</scope>
    <source>
        <strain>RML369-C</strain>
    </source>
</reference>
<accession>Q1RHN3</accession>
<name>RL5_RICBR</name>
<organism>
    <name type="scientific">Rickettsia bellii (strain RML369-C)</name>
    <dbReference type="NCBI Taxonomy" id="336407"/>
    <lineage>
        <taxon>Bacteria</taxon>
        <taxon>Pseudomonadati</taxon>
        <taxon>Pseudomonadota</taxon>
        <taxon>Alphaproteobacteria</taxon>
        <taxon>Rickettsiales</taxon>
        <taxon>Rickettsiaceae</taxon>
        <taxon>Rickettsieae</taxon>
        <taxon>Rickettsia</taxon>
        <taxon>belli group</taxon>
    </lineage>
</organism>
<dbReference type="EMBL" id="CP000087">
    <property type="protein sequence ID" value="ABE05131.1"/>
    <property type="molecule type" value="Genomic_DNA"/>
</dbReference>
<dbReference type="RefSeq" id="WP_011477709.1">
    <property type="nucleotide sequence ID" value="NC_007940.1"/>
</dbReference>
<dbReference type="SMR" id="Q1RHN3"/>
<dbReference type="KEGG" id="rbe:RBE_1050"/>
<dbReference type="eggNOG" id="COG0094">
    <property type="taxonomic scope" value="Bacteria"/>
</dbReference>
<dbReference type="HOGENOM" id="CLU_061015_2_1_5"/>
<dbReference type="OrthoDB" id="9806626at2"/>
<dbReference type="Proteomes" id="UP000001951">
    <property type="component" value="Chromosome"/>
</dbReference>
<dbReference type="GO" id="GO:1990904">
    <property type="term" value="C:ribonucleoprotein complex"/>
    <property type="evidence" value="ECO:0007669"/>
    <property type="project" value="UniProtKB-KW"/>
</dbReference>
<dbReference type="GO" id="GO:0005840">
    <property type="term" value="C:ribosome"/>
    <property type="evidence" value="ECO:0007669"/>
    <property type="project" value="UniProtKB-KW"/>
</dbReference>
<dbReference type="GO" id="GO:0019843">
    <property type="term" value="F:rRNA binding"/>
    <property type="evidence" value="ECO:0007669"/>
    <property type="project" value="UniProtKB-UniRule"/>
</dbReference>
<dbReference type="GO" id="GO:0003735">
    <property type="term" value="F:structural constituent of ribosome"/>
    <property type="evidence" value="ECO:0007669"/>
    <property type="project" value="InterPro"/>
</dbReference>
<dbReference type="GO" id="GO:0000049">
    <property type="term" value="F:tRNA binding"/>
    <property type="evidence" value="ECO:0007669"/>
    <property type="project" value="UniProtKB-UniRule"/>
</dbReference>
<dbReference type="GO" id="GO:0006412">
    <property type="term" value="P:translation"/>
    <property type="evidence" value="ECO:0007669"/>
    <property type="project" value="UniProtKB-UniRule"/>
</dbReference>
<dbReference type="FunFam" id="3.30.1440.10:FF:000001">
    <property type="entry name" value="50S ribosomal protein L5"/>
    <property type="match status" value="1"/>
</dbReference>
<dbReference type="Gene3D" id="3.30.1440.10">
    <property type="match status" value="1"/>
</dbReference>
<dbReference type="HAMAP" id="MF_01333_B">
    <property type="entry name" value="Ribosomal_uL5_B"/>
    <property type="match status" value="1"/>
</dbReference>
<dbReference type="InterPro" id="IPR002132">
    <property type="entry name" value="Ribosomal_uL5"/>
</dbReference>
<dbReference type="InterPro" id="IPR020930">
    <property type="entry name" value="Ribosomal_uL5_bac-type"/>
</dbReference>
<dbReference type="InterPro" id="IPR031309">
    <property type="entry name" value="Ribosomal_uL5_C"/>
</dbReference>
<dbReference type="InterPro" id="IPR022803">
    <property type="entry name" value="Ribosomal_uL5_dom_sf"/>
</dbReference>
<dbReference type="InterPro" id="IPR031310">
    <property type="entry name" value="Ribosomal_uL5_N"/>
</dbReference>
<dbReference type="NCBIfam" id="NF000585">
    <property type="entry name" value="PRK00010.1"/>
    <property type="match status" value="1"/>
</dbReference>
<dbReference type="PANTHER" id="PTHR11994">
    <property type="entry name" value="60S RIBOSOMAL PROTEIN L11-RELATED"/>
    <property type="match status" value="1"/>
</dbReference>
<dbReference type="Pfam" id="PF00281">
    <property type="entry name" value="Ribosomal_L5"/>
    <property type="match status" value="1"/>
</dbReference>
<dbReference type="Pfam" id="PF00673">
    <property type="entry name" value="Ribosomal_L5_C"/>
    <property type="match status" value="1"/>
</dbReference>
<dbReference type="PIRSF" id="PIRSF002161">
    <property type="entry name" value="Ribosomal_L5"/>
    <property type="match status" value="1"/>
</dbReference>
<dbReference type="SUPFAM" id="SSF55282">
    <property type="entry name" value="RL5-like"/>
    <property type="match status" value="1"/>
</dbReference>
<comment type="function">
    <text evidence="1">This is one of the proteins that bind and probably mediate the attachment of the 5S RNA into the large ribosomal subunit, where it forms part of the central protuberance. In the 70S ribosome it contacts protein S13 of the 30S subunit (bridge B1b), connecting the 2 subunits; this bridge is implicated in subunit movement. Contacts the P site tRNA; the 5S rRNA and some of its associated proteins might help stabilize positioning of ribosome-bound tRNAs.</text>
</comment>
<comment type="subunit">
    <text evidence="1">Part of the 50S ribosomal subunit; part of the 5S rRNA/L5/L18/L25 subcomplex. Contacts the 5S rRNA and the P site tRNA. Forms a bridge to the 30S subunit in the 70S ribosome.</text>
</comment>
<comment type="similarity">
    <text evidence="1">Belongs to the universal ribosomal protein uL5 family.</text>
</comment>
<sequence length="179" mass="20448">MLRFKELYQKEIISNLQKEFSYKNKHEIPAIEKIVINMGVGEAIADSKVIDKAVNDLTLISGQKPFVTSARKSIATFKLRDGMKIGCKVTLRKDRMYDFLERLVIVALPRVKEFRGFSYKSFDGKGNFTFGLKEQIVFPEINYDKIDSIRGMDITIVTSAKTDKEGKSLLSGFNLPFYN</sequence>
<feature type="chain" id="PRO_0000243055" description="Large ribosomal subunit protein uL5">
    <location>
        <begin position="1"/>
        <end position="179"/>
    </location>
</feature>
<evidence type="ECO:0000255" key="1">
    <source>
        <dbReference type="HAMAP-Rule" id="MF_01333"/>
    </source>
</evidence>
<evidence type="ECO:0000305" key="2"/>